<dbReference type="EC" id="2.7.1.24" evidence="1"/>
<dbReference type="EMBL" id="AE015925">
    <property type="protein sequence ID" value="AAP04881.1"/>
    <property type="molecule type" value="Genomic_DNA"/>
</dbReference>
<dbReference type="RefSeq" id="WP_011006102.1">
    <property type="nucleotide sequence ID" value="NC_003361.3"/>
</dbReference>
<dbReference type="SMR" id="Q824L6"/>
<dbReference type="STRING" id="227941.CCA_00129"/>
<dbReference type="KEGG" id="cca:CCA_00129"/>
<dbReference type="eggNOG" id="COG0237">
    <property type="taxonomic scope" value="Bacteria"/>
</dbReference>
<dbReference type="HOGENOM" id="CLU_057180_3_1_0"/>
<dbReference type="OrthoDB" id="17745at2"/>
<dbReference type="UniPathway" id="UPA00241">
    <property type="reaction ID" value="UER00356"/>
</dbReference>
<dbReference type="Proteomes" id="UP000002193">
    <property type="component" value="Chromosome"/>
</dbReference>
<dbReference type="GO" id="GO:0005737">
    <property type="term" value="C:cytoplasm"/>
    <property type="evidence" value="ECO:0007669"/>
    <property type="project" value="UniProtKB-SubCell"/>
</dbReference>
<dbReference type="GO" id="GO:0005524">
    <property type="term" value="F:ATP binding"/>
    <property type="evidence" value="ECO:0007669"/>
    <property type="project" value="UniProtKB-UniRule"/>
</dbReference>
<dbReference type="GO" id="GO:0004140">
    <property type="term" value="F:dephospho-CoA kinase activity"/>
    <property type="evidence" value="ECO:0007669"/>
    <property type="project" value="UniProtKB-UniRule"/>
</dbReference>
<dbReference type="GO" id="GO:0015937">
    <property type="term" value="P:coenzyme A biosynthetic process"/>
    <property type="evidence" value="ECO:0007669"/>
    <property type="project" value="UniProtKB-UniRule"/>
</dbReference>
<dbReference type="CDD" id="cd02022">
    <property type="entry name" value="DPCK"/>
    <property type="match status" value="1"/>
</dbReference>
<dbReference type="Gene3D" id="3.40.50.300">
    <property type="entry name" value="P-loop containing nucleotide triphosphate hydrolases"/>
    <property type="match status" value="1"/>
</dbReference>
<dbReference type="HAMAP" id="MF_00376">
    <property type="entry name" value="Dephospho_CoA_kinase"/>
    <property type="match status" value="1"/>
</dbReference>
<dbReference type="InterPro" id="IPR001977">
    <property type="entry name" value="Depp_CoAkinase"/>
</dbReference>
<dbReference type="InterPro" id="IPR027417">
    <property type="entry name" value="P-loop_NTPase"/>
</dbReference>
<dbReference type="NCBIfam" id="TIGR00152">
    <property type="entry name" value="dephospho-CoA kinase"/>
    <property type="match status" value="1"/>
</dbReference>
<dbReference type="PANTHER" id="PTHR10695:SF46">
    <property type="entry name" value="BIFUNCTIONAL COENZYME A SYNTHASE-RELATED"/>
    <property type="match status" value="1"/>
</dbReference>
<dbReference type="PANTHER" id="PTHR10695">
    <property type="entry name" value="DEPHOSPHO-COA KINASE-RELATED"/>
    <property type="match status" value="1"/>
</dbReference>
<dbReference type="Pfam" id="PF01121">
    <property type="entry name" value="CoaE"/>
    <property type="match status" value="1"/>
</dbReference>
<dbReference type="SUPFAM" id="SSF52540">
    <property type="entry name" value="P-loop containing nucleoside triphosphate hydrolases"/>
    <property type="match status" value="1"/>
</dbReference>
<dbReference type="PROSITE" id="PS51219">
    <property type="entry name" value="DPCK"/>
    <property type="match status" value="1"/>
</dbReference>
<gene>
    <name evidence="1" type="primary">coaE</name>
    <name type="ordered locus">CCA_00129</name>
</gene>
<proteinExistence type="inferred from homology"/>
<reference key="1">
    <citation type="journal article" date="2003" name="Nucleic Acids Res.">
        <title>Genome sequence of Chlamydophila caviae (Chlamydia psittaci GPIC): examining the role of niche-specific genes in the evolution of the Chlamydiaceae.</title>
        <authorList>
            <person name="Read T.D."/>
            <person name="Myers G.S.A."/>
            <person name="Brunham R.C."/>
            <person name="Nelson W.C."/>
            <person name="Paulsen I.T."/>
            <person name="Heidelberg J.F."/>
            <person name="Holtzapple E.K."/>
            <person name="Khouri H.M."/>
            <person name="Federova N.B."/>
            <person name="Carty H.A."/>
            <person name="Umayam L.A."/>
            <person name="Haft D.H."/>
            <person name="Peterson J.D."/>
            <person name="Beanan M.J."/>
            <person name="White O."/>
            <person name="Salzberg S.L."/>
            <person name="Hsia R.-C."/>
            <person name="McClarty G."/>
            <person name="Rank R.G."/>
            <person name="Bavoil P.M."/>
            <person name="Fraser C.M."/>
        </authorList>
    </citation>
    <scope>NUCLEOTIDE SEQUENCE [LARGE SCALE GENOMIC DNA]</scope>
    <source>
        <strain>ATCC VR-813 / DSM 19441 / 03DC25 / GPIC</strain>
    </source>
</reference>
<protein>
    <recommendedName>
        <fullName evidence="1">Dephospho-CoA kinase</fullName>
        <ecNumber evidence="1">2.7.1.24</ecNumber>
    </recommendedName>
    <alternativeName>
        <fullName evidence="1">Dephosphocoenzyme A kinase</fullName>
    </alternativeName>
</protein>
<keyword id="KW-0067">ATP-binding</keyword>
<keyword id="KW-0173">Coenzyme A biosynthesis</keyword>
<keyword id="KW-0963">Cytoplasm</keyword>
<keyword id="KW-0418">Kinase</keyword>
<keyword id="KW-0547">Nucleotide-binding</keyword>
<keyword id="KW-0808">Transferase</keyword>
<comment type="function">
    <text evidence="1">Catalyzes the phosphorylation of the 3'-hydroxyl group of dephosphocoenzyme A to form coenzyme A.</text>
</comment>
<comment type="catalytic activity">
    <reaction evidence="1">
        <text>3'-dephospho-CoA + ATP = ADP + CoA + H(+)</text>
        <dbReference type="Rhea" id="RHEA:18245"/>
        <dbReference type="ChEBI" id="CHEBI:15378"/>
        <dbReference type="ChEBI" id="CHEBI:30616"/>
        <dbReference type="ChEBI" id="CHEBI:57287"/>
        <dbReference type="ChEBI" id="CHEBI:57328"/>
        <dbReference type="ChEBI" id="CHEBI:456216"/>
        <dbReference type="EC" id="2.7.1.24"/>
    </reaction>
</comment>
<comment type="pathway">
    <text evidence="1">Cofactor biosynthesis; coenzyme A biosynthesis; CoA from (R)-pantothenate: step 5/5.</text>
</comment>
<comment type="subcellular location">
    <subcellularLocation>
        <location evidence="1">Cytoplasm</location>
    </subcellularLocation>
</comment>
<comment type="similarity">
    <text evidence="1">Belongs to the CoaE family.</text>
</comment>
<organism>
    <name type="scientific">Chlamydia caviae (strain ATCC VR-813 / DSM 19441 / 03DC25 / GPIC)</name>
    <name type="common">Chlamydophila caviae</name>
    <dbReference type="NCBI Taxonomy" id="227941"/>
    <lineage>
        <taxon>Bacteria</taxon>
        <taxon>Pseudomonadati</taxon>
        <taxon>Chlamydiota</taxon>
        <taxon>Chlamydiia</taxon>
        <taxon>Chlamydiales</taxon>
        <taxon>Chlamydiaceae</taxon>
        <taxon>Chlamydia/Chlamydophila group</taxon>
        <taxon>Chlamydia</taxon>
    </lineage>
</organism>
<evidence type="ECO:0000255" key="1">
    <source>
        <dbReference type="HAMAP-Rule" id="MF_00376"/>
    </source>
</evidence>
<sequence>MLELLKVSITGDLSSGKTEASRVFQDLGAYVISADKVSHSFLVPHSHIGRRVIDLLGPEVVVDNAFDRKVIAEKVFDNLVLLQALEAILHPEVRRIIEEQYYQVAKERKHPLFIAEVPLLYEIHYAKWFDRVILITADENIRRERFTKKTNCSDLNFYQRCARFSSNEEKKMHADIVIENNGTKEELRHKVEEYFYALKGAL</sequence>
<name>COAE_CHLCV</name>
<accession>Q824L6</accession>
<feature type="chain" id="PRO_0000172924" description="Dephospho-CoA kinase">
    <location>
        <begin position="1"/>
        <end position="202"/>
    </location>
</feature>
<feature type="domain" description="DPCK" evidence="1">
    <location>
        <begin position="6"/>
        <end position="202"/>
    </location>
</feature>
<feature type="binding site" evidence="1">
    <location>
        <begin position="14"/>
        <end position="19"/>
    </location>
    <ligand>
        <name>ATP</name>
        <dbReference type="ChEBI" id="CHEBI:30616"/>
    </ligand>
</feature>